<name>FETP_ACTSZ</name>
<sequence length="90" mass="10676">MARTVFCEHLKQEAEGLDFQLYPGELGKRIFEHISKQAWGDWLKKQTMLVNEKKLNMMNAEHRKLLEQEMVNFLFEGKDVHIEGYVPPEK</sequence>
<gene>
    <name type="ordered locus">Asuc_0541</name>
</gene>
<keyword id="KW-0408">Iron</keyword>
<keyword id="KW-1185">Reference proteome</keyword>
<dbReference type="EMBL" id="CP000746">
    <property type="protein sequence ID" value="ABR73916.1"/>
    <property type="molecule type" value="Genomic_DNA"/>
</dbReference>
<dbReference type="RefSeq" id="WP_012072296.1">
    <property type="nucleotide sequence ID" value="NC_009655.1"/>
</dbReference>
<dbReference type="SMR" id="A6VLR9"/>
<dbReference type="STRING" id="339671.Asuc_0541"/>
<dbReference type="KEGG" id="asu:Asuc_0541"/>
<dbReference type="eggNOG" id="COG2924">
    <property type="taxonomic scope" value="Bacteria"/>
</dbReference>
<dbReference type="HOGENOM" id="CLU_170994_0_0_6"/>
<dbReference type="OrthoDB" id="9804318at2"/>
<dbReference type="Proteomes" id="UP000001114">
    <property type="component" value="Chromosome"/>
</dbReference>
<dbReference type="GO" id="GO:0005829">
    <property type="term" value="C:cytosol"/>
    <property type="evidence" value="ECO:0007669"/>
    <property type="project" value="TreeGrafter"/>
</dbReference>
<dbReference type="GO" id="GO:0005506">
    <property type="term" value="F:iron ion binding"/>
    <property type="evidence" value="ECO:0007669"/>
    <property type="project" value="UniProtKB-UniRule"/>
</dbReference>
<dbReference type="GO" id="GO:0034599">
    <property type="term" value="P:cellular response to oxidative stress"/>
    <property type="evidence" value="ECO:0007669"/>
    <property type="project" value="TreeGrafter"/>
</dbReference>
<dbReference type="FunFam" id="1.10.3880.10:FF:000001">
    <property type="entry name" value="Probable Fe(2+)-trafficking protein"/>
    <property type="match status" value="1"/>
</dbReference>
<dbReference type="Gene3D" id="1.10.3880.10">
    <property type="entry name" value="Fe(II) trafficking protein YggX"/>
    <property type="match status" value="1"/>
</dbReference>
<dbReference type="HAMAP" id="MF_00686">
    <property type="entry name" value="Fe_traffic_YggX"/>
    <property type="match status" value="1"/>
</dbReference>
<dbReference type="InterPro" id="IPR007457">
    <property type="entry name" value="Fe_traffick_prot_YggX"/>
</dbReference>
<dbReference type="InterPro" id="IPR036766">
    <property type="entry name" value="Fe_traffick_prot_YggX_sf"/>
</dbReference>
<dbReference type="NCBIfam" id="NF003817">
    <property type="entry name" value="PRK05408.1"/>
    <property type="match status" value="1"/>
</dbReference>
<dbReference type="PANTHER" id="PTHR36965">
    <property type="entry name" value="FE(2+)-TRAFFICKING PROTEIN-RELATED"/>
    <property type="match status" value="1"/>
</dbReference>
<dbReference type="PANTHER" id="PTHR36965:SF1">
    <property type="entry name" value="FE(2+)-TRAFFICKING PROTEIN-RELATED"/>
    <property type="match status" value="1"/>
</dbReference>
<dbReference type="Pfam" id="PF04362">
    <property type="entry name" value="Iron_traffic"/>
    <property type="match status" value="1"/>
</dbReference>
<dbReference type="PIRSF" id="PIRSF029827">
    <property type="entry name" value="Fe_traffic_YggX"/>
    <property type="match status" value="1"/>
</dbReference>
<dbReference type="SUPFAM" id="SSF111148">
    <property type="entry name" value="YggX-like"/>
    <property type="match status" value="1"/>
</dbReference>
<accession>A6VLR9</accession>
<feature type="chain" id="PRO_1000072736" description="Probable Fe(2+)-trafficking protein">
    <location>
        <begin position="1"/>
        <end position="90"/>
    </location>
</feature>
<reference key="1">
    <citation type="journal article" date="2010" name="BMC Genomics">
        <title>A genomic perspective on the potential of Actinobacillus succinogenes for industrial succinate production.</title>
        <authorList>
            <person name="McKinlay J.B."/>
            <person name="Laivenieks M."/>
            <person name="Schindler B.D."/>
            <person name="McKinlay A.A."/>
            <person name="Siddaramappa S."/>
            <person name="Challacombe J.F."/>
            <person name="Lowry S.R."/>
            <person name="Clum A."/>
            <person name="Lapidus A.L."/>
            <person name="Burkhart K.B."/>
            <person name="Harkins V."/>
            <person name="Vieille C."/>
        </authorList>
    </citation>
    <scope>NUCLEOTIDE SEQUENCE [LARGE SCALE GENOMIC DNA]</scope>
    <source>
        <strain>ATCC 55618 / DSM 22257 / CCUG 43843 / 130Z</strain>
    </source>
</reference>
<protein>
    <recommendedName>
        <fullName evidence="1">Probable Fe(2+)-trafficking protein</fullName>
    </recommendedName>
</protein>
<comment type="function">
    <text evidence="1">Could be a mediator in iron transactions between iron acquisition and iron-requiring processes, such as synthesis and/or repair of Fe-S clusters in biosynthetic enzymes.</text>
</comment>
<comment type="similarity">
    <text evidence="1">Belongs to the Fe(2+)-trafficking protein family.</text>
</comment>
<evidence type="ECO:0000255" key="1">
    <source>
        <dbReference type="HAMAP-Rule" id="MF_00686"/>
    </source>
</evidence>
<organism>
    <name type="scientific">Actinobacillus succinogenes (strain ATCC 55618 / DSM 22257 / CCUG 43843 / 130Z)</name>
    <dbReference type="NCBI Taxonomy" id="339671"/>
    <lineage>
        <taxon>Bacteria</taxon>
        <taxon>Pseudomonadati</taxon>
        <taxon>Pseudomonadota</taxon>
        <taxon>Gammaproteobacteria</taxon>
        <taxon>Pasteurellales</taxon>
        <taxon>Pasteurellaceae</taxon>
        <taxon>Actinobacillus</taxon>
    </lineage>
</organism>
<proteinExistence type="inferred from homology"/>